<dbReference type="EMBL" id="AE009442">
    <property type="protein sequence ID" value="AAO28832.1"/>
    <property type="molecule type" value="Genomic_DNA"/>
</dbReference>
<dbReference type="RefSeq" id="WP_011097875.1">
    <property type="nucleotide sequence ID" value="NC_004556.1"/>
</dbReference>
<dbReference type="KEGG" id="xft:PD_0970"/>
<dbReference type="HOGENOM" id="CLU_1834403_0_0_6"/>
<dbReference type="Proteomes" id="UP000002516">
    <property type="component" value="Chromosome"/>
</dbReference>
<dbReference type="InterPro" id="IPR020351">
    <property type="entry name" value="Phage_TAC_9"/>
</dbReference>
<dbReference type="Pfam" id="PF10876">
    <property type="entry name" value="Phage_TAC_9"/>
    <property type="match status" value="1"/>
</dbReference>
<organism>
    <name type="scientific">Xylella fastidiosa (strain Temecula1 / ATCC 700964)</name>
    <dbReference type="NCBI Taxonomy" id="183190"/>
    <lineage>
        <taxon>Bacteria</taxon>
        <taxon>Pseudomonadati</taxon>
        <taxon>Pseudomonadota</taxon>
        <taxon>Gammaproteobacteria</taxon>
        <taxon>Lysobacterales</taxon>
        <taxon>Lysobacteraceae</taxon>
        <taxon>Xylella</taxon>
    </lineage>
</organism>
<proteinExistence type="predicted"/>
<accession>Q87CU3</accession>
<feature type="chain" id="PRO_0000220279" description="Uncharacterized protein PD_0970">
    <location>
        <begin position="1"/>
        <end position="140"/>
    </location>
</feature>
<reference key="1">
    <citation type="journal article" date="2003" name="J. Bacteriol.">
        <title>Comparative analyses of the complete genome sequences of Pierce's disease and citrus variegated chlorosis strains of Xylella fastidiosa.</title>
        <authorList>
            <person name="Van Sluys M.A."/>
            <person name="de Oliveira M.C."/>
            <person name="Monteiro-Vitorello C.B."/>
            <person name="Miyaki C.Y."/>
            <person name="Furlan L.R."/>
            <person name="Camargo L.E.A."/>
            <person name="da Silva A.C.R."/>
            <person name="Moon D.H."/>
            <person name="Takita M.A."/>
            <person name="Lemos E.G.M."/>
            <person name="Machado M.A."/>
            <person name="Ferro M.I.T."/>
            <person name="da Silva F.R."/>
            <person name="Goldman M.H.S."/>
            <person name="Goldman G.H."/>
            <person name="Lemos M.V.F."/>
            <person name="El-Dorry H."/>
            <person name="Tsai S.M."/>
            <person name="Carrer H."/>
            <person name="Carraro D.M."/>
            <person name="de Oliveira R.C."/>
            <person name="Nunes L.R."/>
            <person name="Siqueira W.J."/>
            <person name="Coutinho L.L."/>
            <person name="Kimura E.T."/>
            <person name="Ferro E.S."/>
            <person name="Harakava R."/>
            <person name="Kuramae E.E."/>
            <person name="Marino C.L."/>
            <person name="Giglioti E."/>
            <person name="Abreu I.L."/>
            <person name="Alves L.M.C."/>
            <person name="do Amaral A.M."/>
            <person name="Baia G.S."/>
            <person name="Blanco S.R."/>
            <person name="Brito M.S."/>
            <person name="Cannavan F.S."/>
            <person name="Celestino A.V."/>
            <person name="da Cunha A.F."/>
            <person name="Fenille R.C."/>
            <person name="Ferro J.A."/>
            <person name="Formighieri E.F."/>
            <person name="Kishi L.T."/>
            <person name="Leoni S.G."/>
            <person name="Oliveira A.R."/>
            <person name="Rosa V.E. Jr."/>
            <person name="Sassaki F.T."/>
            <person name="Sena J.A.D."/>
            <person name="de Souza A.A."/>
            <person name="Truffi D."/>
            <person name="Tsukumo F."/>
            <person name="Yanai G.M."/>
            <person name="Zaros L.G."/>
            <person name="Civerolo E.L."/>
            <person name="Simpson A.J.G."/>
            <person name="Almeida N.F. Jr."/>
            <person name="Setubal J.C."/>
            <person name="Kitajima J.P."/>
        </authorList>
    </citation>
    <scope>NUCLEOTIDE SEQUENCE [LARGE SCALE GENOMIC DNA]</scope>
    <source>
        <strain>Temecula1 / ATCC 700964</strain>
    </source>
</reference>
<protein>
    <recommendedName>
        <fullName>Uncharacterized protein PD_0970</fullName>
    </recommendedName>
</protein>
<sequence length="140" mass="15443">MNNEHRFEIDGITYLMTPANAMAAWQSLKRAGVLLRGMDADALTNTQGAASVALGAILSHLGDPAVTEIEALVFEQTAIKTPEGTTYRLSPDRLNEHFNTRRTHLLRVLMEGVKYQYSDFFAGGMAAFQELIPMPSAEKQ</sequence>
<name>Y970_XYLFT</name>
<gene>
    <name type="ordered locus">PD_0970</name>
</gene>
<keyword id="KW-1185">Reference proteome</keyword>